<comment type="function">
    <text evidence="1">Major role in the synthesis of nucleoside triphosphates other than ATP. The ATP gamma phosphate is transferred to the NDP beta phosphate via a ping-pong mechanism, using a phosphorylated active-site intermediate.</text>
</comment>
<comment type="catalytic activity">
    <reaction evidence="1">
        <text>a 2'-deoxyribonucleoside 5'-diphosphate + ATP = a 2'-deoxyribonucleoside 5'-triphosphate + ADP</text>
        <dbReference type="Rhea" id="RHEA:44640"/>
        <dbReference type="ChEBI" id="CHEBI:30616"/>
        <dbReference type="ChEBI" id="CHEBI:61560"/>
        <dbReference type="ChEBI" id="CHEBI:73316"/>
        <dbReference type="ChEBI" id="CHEBI:456216"/>
        <dbReference type="EC" id="2.7.4.6"/>
    </reaction>
</comment>
<comment type="catalytic activity">
    <reaction evidence="1">
        <text>a ribonucleoside 5'-diphosphate + ATP = a ribonucleoside 5'-triphosphate + ADP</text>
        <dbReference type="Rhea" id="RHEA:18113"/>
        <dbReference type="ChEBI" id="CHEBI:30616"/>
        <dbReference type="ChEBI" id="CHEBI:57930"/>
        <dbReference type="ChEBI" id="CHEBI:61557"/>
        <dbReference type="ChEBI" id="CHEBI:456216"/>
        <dbReference type="EC" id="2.7.4.6"/>
    </reaction>
</comment>
<comment type="cofactor">
    <cofactor evidence="1">
        <name>Mg(2+)</name>
        <dbReference type="ChEBI" id="CHEBI:18420"/>
    </cofactor>
</comment>
<comment type="subunit">
    <text evidence="1">Homotetramer.</text>
</comment>
<comment type="subcellular location">
    <subcellularLocation>
        <location evidence="1">Cytoplasm</location>
    </subcellularLocation>
</comment>
<comment type="similarity">
    <text evidence="1">Belongs to the NDK family.</text>
</comment>
<gene>
    <name evidence="1" type="primary">ndk</name>
    <name type="ordered locus">Tola_2012</name>
</gene>
<feature type="chain" id="PRO_1000206230" description="Nucleoside diphosphate kinase">
    <location>
        <begin position="1"/>
        <end position="143"/>
    </location>
</feature>
<feature type="active site" description="Pros-phosphohistidine intermediate" evidence="1">
    <location>
        <position position="117"/>
    </location>
</feature>
<feature type="binding site" evidence="1">
    <location>
        <position position="11"/>
    </location>
    <ligand>
        <name>ATP</name>
        <dbReference type="ChEBI" id="CHEBI:30616"/>
    </ligand>
</feature>
<feature type="binding site" evidence="1">
    <location>
        <position position="59"/>
    </location>
    <ligand>
        <name>ATP</name>
        <dbReference type="ChEBI" id="CHEBI:30616"/>
    </ligand>
</feature>
<feature type="binding site" evidence="1">
    <location>
        <position position="87"/>
    </location>
    <ligand>
        <name>ATP</name>
        <dbReference type="ChEBI" id="CHEBI:30616"/>
    </ligand>
</feature>
<feature type="binding site" evidence="1">
    <location>
        <position position="93"/>
    </location>
    <ligand>
        <name>ATP</name>
        <dbReference type="ChEBI" id="CHEBI:30616"/>
    </ligand>
</feature>
<feature type="binding site" evidence="1">
    <location>
        <position position="104"/>
    </location>
    <ligand>
        <name>ATP</name>
        <dbReference type="ChEBI" id="CHEBI:30616"/>
    </ligand>
</feature>
<feature type="binding site" evidence="1">
    <location>
        <position position="114"/>
    </location>
    <ligand>
        <name>ATP</name>
        <dbReference type="ChEBI" id="CHEBI:30616"/>
    </ligand>
</feature>
<protein>
    <recommendedName>
        <fullName evidence="1">Nucleoside diphosphate kinase</fullName>
        <shortName evidence="1">NDK</shortName>
        <shortName evidence="1">NDP kinase</shortName>
        <ecNumber evidence="1">2.7.4.6</ecNumber>
    </recommendedName>
    <alternativeName>
        <fullName evidence="1">Nucleoside-2-P kinase</fullName>
    </alternativeName>
</protein>
<accession>C4L7J5</accession>
<keyword id="KW-0067">ATP-binding</keyword>
<keyword id="KW-0963">Cytoplasm</keyword>
<keyword id="KW-0418">Kinase</keyword>
<keyword id="KW-0460">Magnesium</keyword>
<keyword id="KW-0479">Metal-binding</keyword>
<keyword id="KW-0546">Nucleotide metabolism</keyword>
<keyword id="KW-0547">Nucleotide-binding</keyword>
<keyword id="KW-0597">Phosphoprotein</keyword>
<keyword id="KW-1185">Reference proteome</keyword>
<keyword id="KW-0808">Transferase</keyword>
<name>NDK_TOLAT</name>
<proteinExistence type="inferred from homology"/>
<organism>
    <name type="scientific">Tolumonas auensis (strain DSM 9187 / NBRC 110442 / TA 4)</name>
    <dbReference type="NCBI Taxonomy" id="595494"/>
    <lineage>
        <taxon>Bacteria</taxon>
        <taxon>Pseudomonadati</taxon>
        <taxon>Pseudomonadota</taxon>
        <taxon>Gammaproteobacteria</taxon>
        <taxon>Aeromonadales</taxon>
        <taxon>Aeromonadaceae</taxon>
        <taxon>Tolumonas</taxon>
    </lineage>
</organism>
<reference key="1">
    <citation type="submission" date="2009-05" db="EMBL/GenBank/DDBJ databases">
        <title>Complete sequence of Tolumonas auensis DSM 9187.</title>
        <authorList>
            <consortium name="US DOE Joint Genome Institute"/>
            <person name="Lucas S."/>
            <person name="Copeland A."/>
            <person name="Lapidus A."/>
            <person name="Glavina del Rio T."/>
            <person name="Tice H."/>
            <person name="Bruce D."/>
            <person name="Goodwin L."/>
            <person name="Pitluck S."/>
            <person name="Chertkov O."/>
            <person name="Brettin T."/>
            <person name="Detter J.C."/>
            <person name="Han C."/>
            <person name="Larimer F."/>
            <person name="Land M."/>
            <person name="Hauser L."/>
            <person name="Kyrpides N."/>
            <person name="Mikhailova N."/>
            <person name="Spring S."/>
            <person name="Beller H."/>
        </authorList>
    </citation>
    <scope>NUCLEOTIDE SEQUENCE [LARGE SCALE GENOMIC DNA]</scope>
    <source>
        <strain>DSM 9187 / NBRC 110442 / TA 4</strain>
    </source>
</reference>
<sequence length="143" mass="15956">MTIERTFSIIKPDAVAKNIIGEIYHRFECAGLHIIAAKMLHLSQEQAAGFYAEHKGKPFYDNLLKFMTSGPIVVQVLEGQDAIRRHRELLGSTDPEKAQAGTIRADHAISVTQNAVHGSDSSESAAREIEFFFTEDEICPRTR</sequence>
<evidence type="ECO:0000255" key="1">
    <source>
        <dbReference type="HAMAP-Rule" id="MF_00451"/>
    </source>
</evidence>
<dbReference type="EC" id="2.7.4.6" evidence="1"/>
<dbReference type="EMBL" id="CP001616">
    <property type="protein sequence ID" value="ACQ93611.1"/>
    <property type="molecule type" value="Genomic_DNA"/>
</dbReference>
<dbReference type="RefSeq" id="WP_015879079.1">
    <property type="nucleotide sequence ID" value="NC_012691.1"/>
</dbReference>
<dbReference type="SMR" id="C4L7J5"/>
<dbReference type="STRING" id="595494.Tola_2012"/>
<dbReference type="KEGG" id="tau:Tola_2012"/>
<dbReference type="eggNOG" id="COG0105">
    <property type="taxonomic scope" value="Bacteria"/>
</dbReference>
<dbReference type="HOGENOM" id="CLU_060216_8_1_6"/>
<dbReference type="OrthoDB" id="9801161at2"/>
<dbReference type="Proteomes" id="UP000009073">
    <property type="component" value="Chromosome"/>
</dbReference>
<dbReference type="GO" id="GO:0005737">
    <property type="term" value="C:cytoplasm"/>
    <property type="evidence" value="ECO:0007669"/>
    <property type="project" value="UniProtKB-SubCell"/>
</dbReference>
<dbReference type="GO" id="GO:0005524">
    <property type="term" value="F:ATP binding"/>
    <property type="evidence" value="ECO:0007669"/>
    <property type="project" value="UniProtKB-UniRule"/>
</dbReference>
<dbReference type="GO" id="GO:0046872">
    <property type="term" value="F:metal ion binding"/>
    <property type="evidence" value="ECO:0007669"/>
    <property type="project" value="UniProtKB-KW"/>
</dbReference>
<dbReference type="GO" id="GO:0004550">
    <property type="term" value="F:nucleoside diphosphate kinase activity"/>
    <property type="evidence" value="ECO:0007669"/>
    <property type="project" value="UniProtKB-UniRule"/>
</dbReference>
<dbReference type="GO" id="GO:0006241">
    <property type="term" value="P:CTP biosynthetic process"/>
    <property type="evidence" value="ECO:0007669"/>
    <property type="project" value="UniProtKB-UniRule"/>
</dbReference>
<dbReference type="GO" id="GO:0006183">
    <property type="term" value="P:GTP biosynthetic process"/>
    <property type="evidence" value="ECO:0007669"/>
    <property type="project" value="UniProtKB-UniRule"/>
</dbReference>
<dbReference type="GO" id="GO:0006228">
    <property type="term" value="P:UTP biosynthetic process"/>
    <property type="evidence" value="ECO:0007669"/>
    <property type="project" value="UniProtKB-UniRule"/>
</dbReference>
<dbReference type="CDD" id="cd04413">
    <property type="entry name" value="NDPk_I"/>
    <property type="match status" value="1"/>
</dbReference>
<dbReference type="FunFam" id="3.30.70.141:FF:000001">
    <property type="entry name" value="Nucleoside diphosphate kinase"/>
    <property type="match status" value="1"/>
</dbReference>
<dbReference type="Gene3D" id="3.30.70.141">
    <property type="entry name" value="Nucleoside diphosphate kinase-like domain"/>
    <property type="match status" value="1"/>
</dbReference>
<dbReference type="HAMAP" id="MF_00451">
    <property type="entry name" value="NDP_kinase"/>
    <property type="match status" value="1"/>
</dbReference>
<dbReference type="InterPro" id="IPR034907">
    <property type="entry name" value="NDK-like_dom"/>
</dbReference>
<dbReference type="InterPro" id="IPR036850">
    <property type="entry name" value="NDK-like_dom_sf"/>
</dbReference>
<dbReference type="InterPro" id="IPR001564">
    <property type="entry name" value="Nucleoside_diP_kinase"/>
</dbReference>
<dbReference type="NCBIfam" id="NF001908">
    <property type="entry name" value="PRK00668.1"/>
    <property type="match status" value="1"/>
</dbReference>
<dbReference type="PANTHER" id="PTHR46161">
    <property type="entry name" value="NUCLEOSIDE DIPHOSPHATE KINASE"/>
    <property type="match status" value="1"/>
</dbReference>
<dbReference type="PANTHER" id="PTHR46161:SF3">
    <property type="entry name" value="NUCLEOSIDE DIPHOSPHATE KINASE DDB_G0292928-RELATED"/>
    <property type="match status" value="1"/>
</dbReference>
<dbReference type="Pfam" id="PF00334">
    <property type="entry name" value="NDK"/>
    <property type="match status" value="1"/>
</dbReference>
<dbReference type="PRINTS" id="PR01243">
    <property type="entry name" value="NUCDPKINASE"/>
</dbReference>
<dbReference type="SMART" id="SM00562">
    <property type="entry name" value="NDK"/>
    <property type="match status" value="1"/>
</dbReference>
<dbReference type="SUPFAM" id="SSF54919">
    <property type="entry name" value="Nucleoside diphosphate kinase, NDK"/>
    <property type="match status" value="1"/>
</dbReference>
<dbReference type="PROSITE" id="PS51374">
    <property type="entry name" value="NDPK_LIKE"/>
    <property type="match status" value="1"/>
</dbReference>